<keyword id="KW-0963">Cytoplasm</keyword>
<keyword id="KW-0539">Nucleus</keyword>
<keyword id="KW-0597">Phosphoprotein</keyword>
<keyword id="KW-1185">Reference proteome</keyword>
<proteinExistence type="evidence at protein level"/>
<organism>
    <name type="scientific">Saccharomyces cerevisiae (strain ATCC 204508 / S288c)</name>
    <name type="common">Baker's yeast</name>
    <dbReference type="NCBI Taxonomy" id="559292"/>
    <lineage>
        <taxon>Eukaryota</taxon>
        <taxon>Fungi</taxon>
        <taxon>Dikarya</taxon>
        <taxon>Ascomycota</taxon>
        <taxon>Saccharomycotina</taxon>
        <taxon>Saccharomycetes</taxon>
        <taxon>Saccharomycetales</taxon>
        <taxon>Saccharomycetaceae</taxon>
        <taxon>Saccharomyces</taxon>
    </lineage>
</organism>
<gene>
    <name type="ordered locus">YDL129W</name>
</gene>
<comment type="subcellular location">
    <subcellularLocation>
        <location evidence="2">Cytoplasm</location>
    </subcellularLocation>
    <subcellularLocation>
        <location evidence="2">Nucleus</location>
    </subcellularLocation>
</comment>
<comment type="miscellaneous">
    <text evidence="3">Present with 450 molecules/cell in log phase SD medium.</text>
</comment>
<sequence length="291" mass="32916">MELRSRRSAEAYLVTPEEPAKNKSERSIESNERVGTREAKSENTSVFSPAYSDTATTDSSKKVDDNEYYNFTSHFMPSLKNTRELENTILNLIQRIKEGDDETLVSEKDLILSVLNRSLASTSHWKLQAQLSELRATSEGRYAVETNLLKKEVEFLKNKTPKTNESASSAELRPLLERPLKRKLSLPGLAQRPLSTGARLEGGYGGVSPNSWKTKVPKLPLPASRPSLNLSPQKVPTGTDKVEEDTKIDTLELVENNKPHPRMRRRSDNPATNEYVRVFHLEKKEPKSRKK</sequence>
<protein>
    <recommendedName>
        <fullName>Uncharacterized protein YDL129W</fullName>
    </recommendedName>
</protein>
<name>YD129_YEAST</name>
<accession>Q07555</accession>
<accession>D6VRM1</accession>
<dbReference type="EMBL" id="Z74177">
    <property type="protein sequence ID" value="CAA98697.1"/>
    <property type="molecule type" value="Genomic_DNA"/>
</dbReference>
<dbReference type="EMBL" id="BK006938">
    <property type="protein sequence ID" value="DAA11731.1"/>
    <property type="molecule type" value="Genomic_DNA"/>
</dbReference>
<dbReference type="PIR" id="S67672">
    <property type="entry name" value="S67672"/>
</dbReference>
<dbReference type="RefSeq" id="NP_010154.1">
    <property type="nucleotide sequence ID" value="NM_001180188.1"/>
</dbReference>
<dbReference type="SMR" id="Q07555"/>
<dbReference type="BioGRID" id="31934">
    <property type="interactions" value="49"/>
</dbReference>
<dbReference type="DIP" id="DIP-5703N"/>
<dbReference type="FunCoup" id="Q07555">
    <property type="interactions" value="56"/>
</dbReference>
<dbReference type="IntAct" id="Q07555">
    <property type="interactions" value="2"/>
</dbReference>
<dbReference type="MINT" id="Q07555"/>
<dbReference type="STRING" id="4932.YDL129W"/>
<dbReference type="iPTMnet" id="Q07555"/>
<dbReference type="PaxDb" id="4932-YDL129W"/>
<dbReference type="PeptideAtlas" id="Q07555"/>
<dbReference type="EnsemblFungi" id="YDL129W_mRNA">
    <property type="protein sequence ID" value="YDL129W"/>
    <property type="gene ID" value="YDL129W"/>
</dbReference>
<dbReference type="GeneID" id="851428"/>
<dbReference type="KEGG" id="sce:YDL129W"/>
<dbReference type="AGR" id="SGD:S000002287"/>
<dbReference type="SGD" id="S000002287">
    <property type="gene designation" value="YDL129W"/>
</dbReference>
<dbReference type="VEuPathDB" id="FungiDB:YDL129W"/>
<dbReference type="eggNOG" id="ENOG502S5IG">
    <property type="taxonomic scope" value="Eukaryota"/>
</dbReference>
<dbReference type="HOGENOM" id="CLU_091460_0_0_1"/>
<dbReference type="InParanoid" id="Q07555"/>
<dbReference type="OMA" id="EYVRVFH"/>
<dbReference type="OrthoDB" id="4036043at2759"/>
<dbReference type="BioCyc" id="YEAST:G3O-29528-MONOMER"/>
<dbReference type="BioGRID-ORCS" id="851428">
    <property type="hits" value="2 hits in 10 CRISPR screens"/>
</dbReference>
<dbReference type="PRO" id="PR:Q07555"/>
<dbReference type="Proteomes" id="UP000002311">
    <property type="component" value="Chromosome IV"/>
</dbReference>
<dbReference type="RNAct" id="Q07555">
    <property type="molecule type" value="protein"/>
</dbReference>
<dbReference type="GO" id="GO:0005737">
    <property type="term" value="C:cytoplasm"/>
    <property type="evidence" value="ECO:0007005"/>
    <property type="project" value="SGD"/>
</dbReference>
<dbReference type="GO" id="GO:0005634">
    <property type="term" value="C:nucleus"/>
    <property type="evidence" value="ECO:0007005"/>
    <property type="project" value="SGD"/>
</dbReference>
<evidence type="ECO:0000256" key="1">
    <source>
        <dbReference type="SAM" id="MobiDB-lite"/>
    </source>
</evidence>
<evidence type="ECO:0000269" key="2">
    <source>
    </source>
</evidence>
<evidence type="ECO:0000269" key="3">
    <source>
    </source>
</evidence>
<evidence type="ECO:0007744" key="4">
    <source>
    </source>
</evidence>
<feature type="chain" id="PRO_0000240872" description="Uncharacterized protein YDL129W">
    <location>
        <begin position="1"/>
        <end position="291"/>
    </location>
</feature>
<feature type="region of interest" description="Disordered" evidence="1">
    <location>
        <begin position="1"/>
        <end position="62"/>
    </location>
</feature>
<feature type="region of interest" description="Disordered" evidence="1">
    <location>
        <begin position="220"/>
        <end position="242"/>
    </location>
</feature>
<feature type="region of interest" description="Disordered" evidence="1">
    <location>
        <begin position="255"/>
        <end position="291"/>
    </location>
</feature>
<feature type="compositionally biased region" description="Basic and acidic residues" evidence="1">
    <location>
        <begin position="18"/>
        <end position="41"/>
    </location>
</feature>
<feature type="compositionally biased region" description="Polar residues" evidence="1">
    <location>
        <begin position="42"/>
        <end position="58"/>
    </location>
</feature>
<feature type="compositionally biased region" description="Polar residues" evidence="1">
    <location>
        <begin position="226"/>
        <end position="236"/>
    </location>
</feature>
<feature type="modified residue" description="Phosphoserine" evidence="4">
    <location>
        <position position="267"/>
    </location>
</feature>
<reference key="1">
    <citation type="journal article" date="1997" name="Nature">
        <title>The nucleotide sequence of Saccharomyces cerevisiae chromosome IV.</title>
        <authorList>
            <person name="Jacq C."/>
            <person name="Alt-Moerbe J."/>
            <person name="Andre B."/>
            <person name="Arnold W."/>
            <person name="Bahr A."/>
            <person name="Ballesta J.P.G."/>
            <person name="Bargues M."/>
            <person name="Baron L."/>
            <person name="Becker A."/>
            <person name="Biteau N."/>
            <person name="Bloecker H."/>
            <person name="Blugeon C."/>
            <person name="Boskovic J."/>
            <person name="Brandt P."/>
            <person name="Brueckner M."/>
            <person name="Buitrago M.J."/>
            <person name="Coster F."/>
            <person name="Delaveau T."/>
            <person name="del Rey F."/>
            <person name="Dujon B."/>
            <person name="Eide L.G."/>
            <person name="Garcia-Cantalejo J.M."/>
            <person name="Goffeau A."/>
            <person name="Gomez-Peris A."/>
            <person name="Granotier C."/>
            <person name="Hanemann V."/>
            <person name="Hankeln T."/>
            <person name="Hoheisel J.D."/>
            <person name="Jaeger W."/>
            <person name="Jimenez A."/>
            <person name="Jonniaux J.-L."/>
            <person name="Kraemer C."/>
            <person name="Kuester H."/>
            <person name="Laamanen P."/>
            <person name="Legros Y."/>
            <person name="Louis E.J."/>
            <person name="Moeller-Rieker S."/>
            <person name="Monnet A."/>
            <person name="Moro M."/>
            <person name="Mueller-Auer S."/>
            <person name="Nussbaumer B."/>
            <person name="Paricio N."/>
            <person name="Paulin L."/>
            <person name="Perea J."/>
            <person name="Perez-Alonso M."/>
            <person name="Perez-Ortin J.E."/>
            <person name="Pohl T.M."/>
            <person name="Prydz H."/>
            <person name="Purnelle B."/>
            <person name="Rasmussen S.W."/>
            <person name="Remacha M.A."/>
            <person name="Revuelta J.L."/>
            <person name="Rieger M."/>
            <person name="Salom D."/>
            <person name="Saluz H.P."/>
            <person name="Saiz J.E."/>
            <person name="Saren A.-M."/>
            <person name="Schaefer M."/>
            <person name="Scharfe M."/>
            <person name="Schmidt E.R."/>
            <person name="Schneider C."/>
            <person name="Scholler P."/>
            <person name="Schwarz S."/>
            <person name="Soler-Mira A."/>
            <person name="Urrestarazu L.A."/>
            <person name="Verhasselt P."/>
            <person name="Vissers S."/>
            <person name="Voet M."/>
            <person name="Volckaert G."/>
            <person name="Wagner G."/>
            <person name="Wambutt R."/>
            <person name="Wedler E."/>
            <person name="Wedler H."/>
            <person name="Woelfl S."/>
            <person name="Harris D.E."/>
            <person name="Bowman S."/>
            <person name="Brown D."/>
            <person name="Churcher C.M."/>
            <person name="Connor R."/>
            <person name="Dedman K."/>
            <person name="Gentles S."/>
            <person name="Hamlin N."/>
            <person name="Hunt S."/>
            <person name="Jones L."/>
            <person name="McDonald S."/>
            <person name="Murphy L.D."/>
            <person name="Niblett D."/>
            <person name="Odell C."/>
            <person name="Oliver K."/>
            <person name="Rajandream M.A."/>
            <person name="Richards C."/>
            <person name="Shore L."/>
            <person name="Walsh S.V."/>
            <person name="Barrell B.G."/>
            <person name="Dietrich F.S."/>
            <person name="Mulligan J.T."/>
            <person name="Allen E."/>
            <person name="Araujo R."/>
            <person name="Aviles E."/>
            <person name="Berno A."/>
            <person name="Carpenter J."/>
            <person name="Chen E."/>
            <person name="Cherry J.M."/>
            <person name="Chung E."/>
            <person name="Duncan M."/>
            <person name="Hunicke-Smith S."/>
            <person name="Hyman R.W."/>
            <person name="Komp C."/>
            <person name="Lashkari D."/>
            <person name="Lew H."/>
            <person name="Lin D."/>
            <person name="Mosedale D."/>
            <person name="Nakahara K."/>
            <person name="Namath A."/>
            <person name="Oefner P."/>
            <person name="Oh C."/>
            <person name="Petel F.X."/>
            <person name="Roberts D."/>
            <person name="Schramm S."/>
            <person name="Schroeder M."/>
            <person name="Shogren T."/>
            <person name="Shroff N."/>
            <person name="Winant A."/>
            <person name="Yelton M.A."/>
            <person name="Botstein D."/>
            <person name="Davis R.W."/>
            <person name="Johnston M."/>
            <person name="Andrews S."/>
            <person name="Brinkman R."/>
            <person name="Cooper J."/>
            <person name="Ding H."/>
            <person name="Du Z."/>
            <person name="Favello A."/>
            <person name="Fulton L."/>
            <person name="Gattung S."/>
            <person name="Greco T."/>
            <person name="Hallsworth K."/>
            <person name="Hawkins J."/>
            <person name="Hillier L.W."/>
            <person name="Jier M."/>
            <person name="Johnson D."/>
            <person name="Johnston L."/>
            <person name="Kirsten J."/>
            <person name="Kucaba T."/>
            <person name="Langston Y."/>
            <person name="Latreille P."/>
            <person name="Le T."/>
            <person name="Mardis E."/>
            <person name="Menezes S."/>
            <person name="Miller N."/>
            <person name="Nhan M."/>
            <person name="Pauley A."/>
            <person name="Peluso D."/>
            <person name="Rifkin L."/>
            <person name="Riles L."/>
            <person name="Taich A."/>
            <person name="Trevaskis E."/>
            <person name="Vignati D."/>
            <person name="Wilcox L."/>
            <person name="Wohldman P."/>
            <person name="Vaudin M."/>
            <person name="Wilson R."/>
            <person name="Waterston R."/>
            <person name="Albermann K."/>
            <person name="Hani J."/>
            <person name="Heumann K."/>
            <person name="Kleine K."/>
            <person name="Mewes H.-W."/>
            <person name="Zollner A."/>
            <person name="Zaccaria P."/>
        </authorList>
    </citation>
    <scope>NUCLEOTIDE SEQUENCE [LARGE SCALE GENOMIC DNA]</scope>
    <source>
        <strain>ATCC 204508 / S288c</strain>
    </source>
</reference>
<reference key="2">
    <citation type="journal article" date="2014" name="G3 (Bethesda)">
        <title>The reference genome sequence of Saccharomyces cerevisiae: Then and now.</title>
        <authorList>
            <person name="Engel S.R."/>
            <person name="Dietrich F.S."/>
            <person name="Fisk D.G."/>
            <person name="Binkley G."/>
            <person name="Balakrishnan R."/>
            <person name="Costanzo M.C."/>
            <person name="Dwight S.S."/>
            <person name="Hitz B.C."/>
            <person name="Karra K."/>
            <person name="Nash R.S."/>
            <person name="Weng S."/>
            <person name="Wong E.D."/>
            <person name="Lloyd P."/>
            <person name="Skrzypek M.S."/>
            <person name="Miyasato S.R."/>
            <person name="Simison M."/>
            <person name="Cherry J.M."/>
        </authorList>
    </citation>
    <scope>GENOME REANNOTATION</scope>
    <source>
        <strain>ATCC 204508 / S288c</strain>
    </source>
</reference>
<reference key="3">
    <citation type="journal article" date="2003" name="Nature">
        <title>Global analysis of protein localization in budding yeast.</title>
        <authorList>
            <person name="Huh W.-K."/>
            <person name="Falvo J.V."/>
            <person name="Gerke L.C."/>
            <person name="Carroll A.S."/>
            <person name="Howson R.W."/>
            <person name="Weissman J.S."/>
            <person name="O'Shea E.K."/>
        </authorList>
    </citation>
    <scope>SUBCELLULAR LOCATION [LARGE SCALE ANALYSIS]</scope>
</reference>
<reference key="4">
    <citation type="journal article" date="2003" name="Nature">
        <title>Global analysis of protein expression in yeast.</title>
        <authorList>
            <person name="Ghaemmaghami S."/>
            <person name="Huh W.-K."/>
            <person name="Bower K."/>
            <person name="Howson R.W."/>
            <person name="Belle A."/>
            <person name="Dephoure N."/>
            <person name="O'Shea E.K."/>
            <person name="Weissman J.S."/>
        </authorList>
    </citation>
    <scope>LEVEL OF PROTEIN EXPRESSION [LARGE SCALE ANALYSIS]</scope>
</reference>
<reference key="5">
    <citation type="journal article" date="2009" name="Science">
        <title>Global analysis of Cdk1 substrate phosphorylation sites provides insights into evolution.</title>
        <authorList>
            <person name="Holt L.J."/>
            <person name="Tuch B.B."/>
            <person name="Villen J."/>
            <person name="Johnson A.D."/>
            <person name="Gygi S.P."/>
            <person name="Morgan D.O."/>
        </authorList>
    </citation>
    <scope>PHOSPHORYLATION [LARGE SCALE ANALYSIS] AT SER-267</scope>
    <scope>IDENTIFICATION BY MASS SPECTROMETRY [LARGE SCALE ANALYSIS]</scope>
</reference>